<comment type="function">
    <text evidence="1">Dual-specificity methyltransferase that catalyzes the formation of 5-methyluridine at position 54 (m5U54) in all tRNAs, and that of position 341 (m5U341) in tmRNA (transfer-mRNA).</text>
</comment>
<comment type="catalytic activity">
    <reaction evidence="1">
        <text>uridine(54) in tRNA + S-adenosyl-L-methionine = 5-methyluridine(54) in tRNA + S-adenosyl-L-homocysteine + H(+)</text>
        <dbReference type="Rhea" id="RHEA:42712"/>
        <dbReference type="Rhea" id="RHEA-COMP:10167"/>
        <dbReference type="Rhea" id="RHEA-COMP:10193"/>
        <dbReference type="ChEBI" id="CHEBI:15378"/>
        <dbReference type="ChEBI" id="CHEBI:57856"/>
        <dbReference type="ChEBI" id="CHEBI:59789"/>
        <dbReference type="ChEBI" id="CHEBI:65315"/>
        <dbReference type="ChEBI" id="CHEBI:74447"/>
        <dbReference type="EC" id="2.1.1.35"/>
    </reaction>
</comment>
<comment type="catalytic activity">
    <reaction evidence="1">
        <text>uridine(341) in tmRNA + S-adenosyl-L-methionine = 5-methyluridine(341) in tmRNA + S-adenosyl-L-homocysteine + H(+)</text>
        <dbReference type="Rhea" id="RHEA:43612"/>
        <dbReference type="Rhea" id="RHEA-COMP:10630"/>
        <dbReference type="Rhea" id="RHEA-COMP:10631"/>
        <dbReference type="ChEBI" id="CHEBI:15378"/>
        <dbReference type="ChEBI" id="CHEBI:57856"/>
        <dbReference type="ChEBI" id="CHEBI:59789"/>
        <dbReference type="ChEBI" id="CHEBI:65315"/>
        <dbReference type="ChEBI" id="CHEBI:74447"/>
    </reaction>
</comment>
<comment type="similarity">
    <text evidence="1">Belongs to the class I-like SAM-binding methyltransferase superfamily. RNA M5U methyltransferase family. TrmA subfamily.</text>
</comment>
<organism>
    <name type="scientific">Escherichia coli O139:H28 (strain E24377A / ETEC)</name>
    <dbReference type="NCBI Taxonomy" id="331111"/>
    <lineage>
        <taxon>Bacteria</taxon>
        <taxon>Pseudomonadati</taxon>
        <taxon>Pseudomonadota</taxon>
        <taxon>Gammaproteobacteria</taxon>
        <taxon>Enterobacterales</taxon>
        <taxon>Enterobacteriaceae</taxon>
        <taxon>Escherichia</taxon>
    </lineage>
</organism>
<name>TRMA_ECO24</name>
<protein>
    <recommendedName>
        <fullName evidence="1">tRNA/tmRNA (uracil-C(5))-methyltransferase</fullName>
        <ecNumber evidence="1">2.1.1.-</ecNumber>
        <ecNumber evidence="1">2.1.1.35</ecNumber>
    </recommendedName>
    <alternativeName>
        <fullName evidence="1">tRNA (uracil(54)-C(5))-methyltransferase</fullName>
    </alternativeName>
    <alternativeName>
        <fullName evidence="1">tRNA(m5U54)-methyltransferase</fullName>
        <shortName evidence="1">RUMT</shortName>
    </alternativeName>
    <alternativeName>
        <fullName evidence="1">tmRNA (uracil(341)-C(5))-methyltransferase</fullName>
    </alternativeName>
</protein>
<gene>
    <name evidence="1" type="primary">trmA</name>
    <name type="ordered locus">EcE24377A_4506</name>
</gene>
<keyword id="KW-0489">Methyltransferase</keyword>
<keyword id="KW-1185">Reference proteome</keyword>
<keyword id="KW-0949">S-adenosyl-L-methionine</keyword>
<keyword id="KW-0808">Transferase</keyword>
<keyword id="KW-0819">tRNA processing</keyword>
<proteinExistence type="inferred from homology"/>
<sequence length="366" mass="41967">MTPEHLPTEQYEAQLAEKVVRLQSMMAPFSDLVPEVFRSPVSHYRMRAEFRIWHDGDDLYHIIFDQQTKSRIRVDSFPAASELINQLMTAMIAGVRNNPVLRHKLFQIDYLTTLSNQAVVSLLYHKKLDDEWRQEAEALRDALRAQNLNVHLIGRATKTKIELDQDYIDERLPVAGKEMIYRQVENSFTQPNAAMNIQMLEWALDVTKGSKGDLLELYCGNGNFSLALARNFDRVLATEIAKPSVAAAQYNIAANHIDNVQIIRMAAEEFTQAMNGVREFNRLQGIDLKSYQCETIFVDPPRSGLDSETEKMVQAYPRILYISCNPETLCKNLETLSQTHKVERLALFDQFPYTHHMECGVLLTAK</sequence>
<dbReference type="EC" id="2.1.1.-" evidence="1"/>
<dbReference type="EC" id="2.1.1.35" evidence="1"/>
<dbReference type="EMBL" id="CP000800">
    <property type="protein sequence ID" value="ABV16865.1"/>
    <property type="molecule type" value="Genomic_DNA"/>
</dbReference>
<dbReference type="RefSeq" id="WP_000187022.1">
    <property type="nucleotide sequence ID" value="NC_009801.1"/>
</dbReference>
<dbReference type="SMR" id="A7ZUI5"/>
<dbReference type="GeneID" id="75203203"/>
<dbReference type="KEGG" id="ecw:EcE24377A_4506"/>
<dbReference type="HOGENOM" id="CLU_043022_0_0_6"/>
<dbReference type="Proteomes" id="UP000001122">
    <property type="component" value="Chromosome"/>
</dbReference>
<dbReference type="GO" id="GO:0005829">
    <property type="term" value="C:cytosol"/>
    <property type="evidence" value="ECO:0007669"/>
    <property type="project" value="TreeGrafter"/>
</dbReference>
<dbReference type="GO" id="GO:0019843">
    <property type="term" value="F:rRNA binding"/>
    <property type="evidence" value="ECO:0007669"/>
    <property type="project" value="TreeGrafter"/>
</dbReference>
<dbReference type="GO" id="GO:0030697">
    <property type="term" value="F:tRNA (uracil(54)-C5)-methyltransferase activity, S-adenosyl methionine-dependent"/>
    <property type="evidence" value="ECO:0007669"/>
    <property type="project" value="UniProtKB-UniRule"/>
</dbReference>
<dbReference type="GO" id="GO:0000049">
    <property type="term" value="F:tRNA binding"/>
    <property type="evidence" value="ECO:0007669"/>
    <property type="project" value="TreeGrafter"/>
</dbReference>
<dbReference type="GO" id="GO:0030488">
    <property type="term" value="P:tRNA methylation"/>
    <property type="evidence" value="ECO:0007669"/>
    <property type="project" value="UniProtKB-UniRule"/>
</dbReference>
<dbReference type="CDD" id="cd02440">
    <property type="entry name" value="AdoMet_MTases"/>
    <property type="match status" value="1"/>
</dbReference>
<dbReference type="FunFam" id="2.40.50.1070:FF:000001">
    <property type="entry name" value="tRNA/tmRNA (uracil-C(5))-methyltransferase"/>
    <property type="match status" value="1"/>
</dbReference>
<dbReference type="FunFam" id="3.40.50.150:FF:000012">
    <property type="entry name" value="tRNA/tmRNA (uracil-C(5))-methyltransferase"/>
    <property type="match status" value="1"/>
</dbReference>
<dbReference type="Gene3D" id="2.40.50.1070">
    <property type="match status" value="1"/>
</dbReference>
<dbReference type="Gene3D" id="3.40.50.150">
    <property type="entry name" value="Vaccinia Virus protein VP39"/>
    <property type="match status" value="1"/>
</dbReference>
<dbReference type="HAMAP" id="MF_01011">
    <property type="entry name" value="RNA_methyltr_TrmA"/>
    <property type="match status" value="1"/>
</dbReference>
<dbReference type="InterPro" id="IPR030390">
    <property type="entry name" value="MeTrfase_TrmA_AS"/>
</dbReference>
<dbReference type="InterPro" id="IPR030391">
    <property type="entry name" value="MeTrfase_TrmA_CS"/>
</dbReference>
<dbReference type="InterPro" id="IPR029063">
    <property type="entry name" value="SAM-dependent_MTases_sf"/>
</dbReference>
<dbReference type="InterPro" id="IPR011869">
    <property type="entry name" value="TrmA_MeTrfase"/>
</dbReference>
<dbReference type="InterPro" id="IPR010280">
    <property type="entry name" value="U5_MeTrfase_fam"/>
</dbReference>
<dbReference type="NCBIfam" id="TIGR02143">
    <property type="entry name" value="trmA_only"/>
    <property type="match status" value="1"/>
</dbReference>
<dbReference type="PANTHER" id="PTHR47790">
    <property type="entry name" value="TRNA/TMRNA (URACIL-C(5))-METHYLTRANSFERASE"/>
    <property type="match status" value="1"/>
</dbReference>
<dbReference type="PANTHER" id="PTHR47790:SF2">
    <property type="entry name" value="TRNA_TMRNA (URACIL-C(5))-METHYLTRANSFERASE"/>
    <property type="match status" value="1"/>
</dbReference>
<dbReference type="Pfam" id="PF05958">
    <property type="entry name" value="tRNA_U5-meth_tr"/>
    <property type="match status" value="1"/>
</dbReference>
<dbReference type="SUPFAM" id="SSF53335">
    <property type="entry name" value="S-adenosyl-L-methionine-dependent methyltransferases"/>
    <property type="match status" value="1"/>
</dbReference>
<dbReference type="PROSITE" id="PS51687">
    <property type="entry name" value="SAM_MT_RNA_M5U"/>
    <property type="match status" value="1"/>
</dbReference>
<dbReference type="PROSITE" id="PS01230">
    <property type="entry name" value="TRMA_1"/>
    <property type="match status" value="1"/>
</dbReference>
<dbReference type="PROSITE" id="PS01231">
    <property type="entry name" value="TRMA_2"/>
    <property type="match status" value="1"/>
</dbReference>
<accession>A7ZUI5</accession>
<reference key="1">
    <citation type="journal article" date="2008" name="J. Bacteriol.">
        <title>The pangenome structure of Escherichia coli: comparative genomic analysis of E. coli commensal and pathogenic isolates.</title>
        <authorList>
            <person name="Rasko D.A."/>
            <person name="Rosovitz M.J."/>
            <person name="Myers G.S.A."/>
            <person name="Mongodin E.F."/>
            <person name="Fricke W.F."/>
            <person name="Gajer P."/>
            <person name="Crabtree J."/>
            <person name="Sebaihia M."/>
            <person name="Thomson N.R."/>
            <person name="Chaudhuri R."/>
            <person name="Henderson I.R."/>
            <person name="Sperandio V."/>
            <person name="Ravel J."/>
        </authorList>
    </citation>
    <scope>NUCLEOTIDE SEQUENCE [LARGE SCALE GENOMIC DNA]</scope>
    <source>
        <strain>E24377A / ETEC</strain>
    </source>
</reference>
<feature type="chain" id="PRO_1000072907" description="tRNA/tmRNA (uracil-C(5))-methyltransferase">
    <location>
        <begin position="1"/>
        <end position="366"/>
    </location>
</feature>
<feature type="active site" description="Nucleophile" evidence="1">
    <location>
        <position position="324"/>
    </location>
</feature>
<feature type="active site" description="Proton acceptor" evidence="1">
    <location>
        <position position="358"/>
    </location>
</feature>
<feature type="binding site" evidence="1">
    <location>
        <position position="190"/>
    </location>
    <ligand>
        <name>S-adenosyl-L-methionine</name>
        <dbReference type="ChEBI" id="CHEBI:59789"/>
    </ligand>
</feature>
<feature type="binding site" evidence="1">
    <location>
        <position position="218"/>
    </location>
    <ligand>
        <name>S-adenosyl-L-methionine</name>
        <dbReference type="ChEBI" id="CHEBI:59789"/>
    </ligand>
</feature>
<feature type="binding site" evidence="1">
    <location>
        <position position="223"/>
    </location>
    <ligand>
        <name>S-adenosyl-L-methionine</name>
        <dbReference type="ChEBI" id="CHEBI:59789"/>
    </ligand>
</feature>
<feature type="binding site" evidence="1">
    <location>
        <position position="239"/>
    </location>
    <ligand>
        <name>S-adenosyl-L-methionine</name>
        <dbReference type="ChEBI" id="CHEBI:59789"/>
    </ligand>
</feature>
<feature type="binding site" evidence="1">
    <location>
        <position position="299"/>
    </location>
    <ligand>
        <name>S-adenosyl-L-methionine</name>
        <dbReference type="ChEBI" id="CHEBI:59789"/>
    </ligand>
</feature>
<evidence type="ECO:0000255" key="1">
    <source>
        <dbReference type="HAMAP-Rule" id="MF_01011"/>
    </source>
</evidence>